<name>TYRA_STAEQ</name>
<sequence>MRNILFVGLGLIGGSLASNLKYHYSNFNILAYDSDYTQLDEALSIGIIDQKVNDYATAVEIADIIIFATPVEQTIKYLSELTNYNTKTHLIVTDTGSTKLTIQSFEKELLKHDIHLISGHPMAGSHKSGVLNAKKHLFENAYYILVFNEIENNEAATYLKKLLKPTLAKFIVTHANEHDFVTGIVSHVPHIIASILVHLSANHVKDHSLIEKLAAGGFRDITRIASSNAQMWKDITLNNQNHILSLLNEIKEQITGIENLIREQNSNSIYDFFVKAKDYRDQLPVKQHGAISTAYDLYVDIPDKPGMISQITNIISSHNISIINLKILEVREDIYGALQISFKSPEDRENAIKALANFDTYY</sequence>
<organism>
    <name type="scientific">Staphylococcus epidermidis (strain ATCC 35984 / DSM 28319 / BCRC 17069 / CCUG 31568 / BM 3577 / RP62A)</name>
    <dbReference type="NCBI Taxonomy" id="176279"/>
    <lineage>
        <taxon>Bacteria</taxon>
        <taxon>Bacillati</taxon>
        <taxon>Bacillota</taxon>
        <taxon>Bacilli</taxon>
        <taxon>Bacillales</taxon>
        <taxon>Staphylococcaceae</taxon>
        <taxon>Staphylococcus</taxon>
    </lineage>
</organism>
<comment type="catalytic activity">
    <reaction>
        <text>prephenate + NAD(+) = 3-(4-hydroxyphenyl)pyruvate + CO2 + NADH</text>
        <dbReference type="Rhea" id="RHEA:13869"/>
        <dbReference type="ChEBI" id="CHEBI:16526"/>
        <dbReference type="ChEBI" id="CHEBI:29934"/>
        <dbReference type="ChEBI" id="CHEBI:36242"/>
        <dbReference type="ChEBI" id="CHEBI:57540"/>
        <dbReference type="ChEBI" id="CHEBI:57945"/>
        <dbReference type="EC" id="1.3.1.12"/>
    </reaction>
</comment>
<comment type="pathway">
    <text>Amino-acid biosynthesis; L-tyrosine biosynthesis; (4-hydroxyphenyl)pyruvate from prephenate (NAD(+) route): step 1/1.</text>
</comment>
<comment type="similarity">
    <text evidence="4">Belongs to the prephenate/arogenate dehydrogenase family.</text>
</comment>
<reference key="1">
    <citation type="journal article" date="2005" name="J. Bacteriol.">
        <title>Insights on evolution of virulence and resistance from the complete genome analysis of an early methicillin-resistant Staphylococcus aureus strain and a biofilm-producing methicillin-resistant Staphylococcus epidermidis strain.</title>
        <authorList>
            <person name="Gill S.R."/>
            <person name="Fouts D.E."/>
            <person name="Archer G.L."/>
            <person name="Mongodin E.F."/>
            <person name="DeBoy R.T."/>
            <person name="Ravel J."/>
            <person name="Paulsen I.T."/>
            <person name="Kolonay J.F."/>
            <person name="Brinkac L.M."/>
            <person name="Beanan M.J."/>
            <person name="Dodson R.J."/>
            <person name="Daugherty S.C."/>
            <person name="Madupu R."/>
            <person name="Angiuoli S.V."/>
            <person name="Durkin A.S."/>
            <person name="Haft D.H."/>
            <person name="Vamathevan J.J."/>
            <person name="Khouri H."/>
            <person name="Utterback T.R."/>
            <person name="Lee C."/>
            <person name="Dimitrov G."/>
            <person name="Jiang L."/>
            <person name="Qin H."/>
            <person name="Weidman J."/>
            <person name="Tran K."/>
            <person name="Kang K.H."/>
            <person name="Hance I.R."/>
            <person name="Nelson K.E."/>
            <person name="Fraser C.M."/>
        </authorList>
    </citation>
    <scope>NUCLEOTIDE SEQUENCE [LARGE SCALE GENOMIC DNA]</scope>
    <source>
        <strain>ATCC 35984 / DSM 28319 / BCRC 17069 / CCUG 31568 / BM 3577 / RP62A</strain>
    </source>
</reference>
<feature type="chain" id="PRO_0000282664" description="Prephenate dehydrogenase">
    <location>
        <begin position="1"/>
        <end position="362"/>
    </location>
</feature>
<feature type="domain" description="Prephenate/arogenate dehydrogenase" evidence="2">
    <location>
        <begin position="2"/>
        <end position="291"/>
    </location>
</feature>
<feature type="domain" description="ACT" evidence="3">
    <location>
        <begin position="296"/>
        <end position="362"/>
    </location>
</feature>
<feature type="binding site" evidence="1">
    <location>
        <begin position="3"/>
        <end position="33"/>
    </location>
    <ligand>
        <name>NAD(+)</name>
        <dbReference type="ChEBI" id="CHEBI:57540"/>
    </ligand>
</feature>
<evidence type="ECO:0000255" key="1"/>
<evidence type="ECO:0000255" key="2">
    <source>
        <dbReference type="PROSITE-ProRule" id="PRU00522"/>
    </source>
</evidence>
<evidence type="ECO:0000255" key="3">
    <source>
        <dbReference type="PROSITE-ProRule" id="PRU01007"/>
    </source>
</evidence>
<evidence type="ECO:0000305" key="4"/>
<proteinExistence type="inferred from homology"/>
<gene>
    <name type="primary">tyrA</name>
    <name type="ordered locus">SERP0936</name>
</gene>
<accession>Q5HPH6</accession>
<keyword id="KW-0028">Amino-acid biosynthesis</keyword>
<keyword id="KW-0057">Aromatic amino acid biosynthesis</keyword>
<keyword id="KW-0520">NAD</keyword>
<keyword id="KW-0560">Oxidoreductase</keyword>
<keyword id="KW-1185">Reference proteome</keyword>
<keyword id="KW-0827">Tyrosine biosynthesis</keyword>
<protein>
    <recommendedName>
        <fullName>Prephenate dehydrogenase</fullName>
        <shortName>PDH</shortName>
        <ecNumber>1.3.1.12</ecNumber>
    </recommendedName>
</protein>
<dbReference type="EC" id="1.3.1.12"/>
<dbReference type="EMBL" id="CP000029">
    <property type="protein sequence ID" value="AAW54325.1"/>
    <property type="molecule type" value="Genomic_DNA"/>
</dbReference>
<dbReference type="RefSeq" id="WP_001831297.1">
    <property type="nucleotide sequence ID" value="NC_002976.3"/>
</dbReference>
<dbReference type="SMR" id="Q5HPH6"/>
<dbReference type="STRING" id="176279.SERP0936"/>
<dbReference type="KEGG" id="ser:SERP0936"/>
<dbReference type="eggNOG" id="COG0287">
    <property type="taxonomic scope" value="Bacteria"/>
</dbReference>
<dbReference type="HOGENOM" id="CLU_055968_2_1_9"/>
<dbReference type="UniPathway" id="UPA00122">
    <property type="reaction ID" value="UER00961"/>
</dbReference>
<dbReference type="Proteomes" id="UP000000531">
    <property type="component" value="Chromosome"/>
</dbReference>
<dbReference type="GO" id="GO:0070403">
    <property type="term" value="F:NAD+ binding"/>
    <property type="evidence" value="ECO:0007669"/>
    <property type="project" value="InterPro"/>
</dbReference>
<dbReference type="GO" id="GO:0008977">
    <property type="term" value="F:prephenate dehydrogenase (NAD+) activity"/>
    <property type="evidence" value="ECO:0007669"/>
    <property type="project" value="UniProtKB-EC"/>
</dbReference>
<dbReference type="GO" id="GO:0004665">
    <property type="term" value="F:prephenate dehydrogenase (NADP+) activity"/>
    <property type="evidence" value="ECO:0007669"/>
    <property type="project" value="InterPro"/>
</dbReference>
<dbReference type="GO" id="GO:0006571">
    <property type="term" value="P:tyrosine biosynthetic process"/>
    <property type="evidence" value="ECO:0007669"/>
    <property type="project" value="UniProtKB-UniPathway"/>
</dbReference>
<dbReference type="FunFam" id="1.10.3660.10:FF:000003">
    <property type="entry name" value="Prephenate dehydrogenase"/>
    <property type="match status" value="1"/>
</dbReference>
<dbReference type="FunFam" id="3.40.50.720:FF:000208">
    <property type="entry name" value="Prephenate dehydrogenase"/>
    <property type="match status" value="1"/>
</dbReference>
<dbReference type="Gene3D" id="3.30.70.260">
    <property type="match status" value="1"/>
</dbReference>
<dbReference type="Gene3D" id="1.10.3660.10">
    <property type="entry name" value="6-phosphogluconate dehydrogenase C-terminal like domain"/>
    <property type="match status" value="1"/>
</dbReference>
<dbReference type="Gene3D" id="3.40.50.720">
    <property type="entry name" value="NAD(P)-binding Rossmann-like Domain"/>
    <property type="match status" value="1"/>
</dbReference>
<dbReference type="InterPro" id="IPR008927">
    <property type="entry name" value="6-PGluconate_DH-like_C_sf"/>
</dbReference>
<dbReference type="InterPro" id="IPR045865">
    <property type="entry name" value="ACT-like_dom_sf"/>
</dbReference>
<dbReference type="InterPro" id="IPR002912">
    <property type="entry name" value="ACT_dom"/>
</dbReference>
<dbReference type="InterPro" id="IPR036291">
    <property type="entry name" value="NAD(P)-bd_dom_sf"/>
</dbReference>
<dbReference type="InterPro" id="IPR046825">
    <property type="entry name" value="PDH_C"/>
</dbReference>
<dbReference type="InterPro" id="IPR046826">
    <property type="entry name" value="PDH_N"/>
</dbReference>
<dbReference type="InterPro" id="IPR050812">
    <property type="entry name" value="Preph/Arog_dehydrog"/>
</dbReference>
<dbReference type="InterPro" id="IPR003099">
    <property type="entry name" value="Prephen_DH"/>
</dbReference>
<dbReference type="NCBIfam" id="NF005106">
    <property type="entry name" value="PRK06545.1-4"/>
    <property type="match status" value="1"/>
</dbReference>
<dbReference type="NCBIfam" id="NF005107">
    <property type="entry name" value="PRK06545.1-5"/>
    <property type="match status" value="1"/>
</dbReference>
<dbReference type="PANTHER" id="PTHR21363">
    <property type="entry name" value="PREPHENATE DEHYDROGENASE"/>
    <property type="match status" value="1"/>
</dbReference>
<dbReference type="PANTHER" id="PTHR21363:SF0">
    <property type="entry name" value="PREPHENATE DEHYDROGENASE [NADP(+)]"/>
    <property type="match status" value="1"/>
</dbReference>
<dbReference type="Pfam" id="PF01842">
    <property type="entry name" value="ACT"/>
    <property type="match status" value="1"/>
</dbReference>
<dbReference type="Pfam" id="PF20463">
    <property type="entry name" value="PDH_C"/>
    <property type="match status" value="1"/>
</dbReference>
<dbReference type="Pfam" id="PF02153">
    <property type="entry name" value="PDH_N"/>
    <property type="match status" value="1"/>
</dbReference>
<dbReference type="SUPFAM" id="SSF48179">
    <property type="entry name" value="6-phosphogluconate dehydrogenase C-terminal domain-like"/>
    <property type="match status" value="1"/>
</dbReference>
<dbReference type="SUPFAM" id="SSF55021">
    <property type="entry name" value="ACT-like"/>
    <property type="match status" value="1"/>
</dbReference>
<dbReference type="SUPFAM" id="SSF51735">
    <property type="entry name" value="NAD(P)-binding Rossmann-fold domains"/>
    <property type="match status" value="1"/>
</dbReference>
<dbReference type="PROSITE" id="PS51671">
    <property type="entry name" value="ACT"/>
    <property type="match status" value="1"/>
</dbReference>
<dbReference type="PROSITE" id="PS51176">
    <property type="entry name" value="PDH_ADH"/>
    <property type="match status" value="1"/>
</dbReference>